<proteinExistence type="inferred from homology"/>
<feature type="chain" id="PRO_0000157355" description="Glycerol-1-phosphate dehydrogenase [NAD(P)+]">
    <location>
        <begin position="1"/>
        <end position="352"/>
    </location>
</feature>
<feature type="binding site" evidence="1">
    <location>
        <begin position="99"/>
        <end position="103"/>
    </location>
    <ligand>
        <name>NAD(+)</name>
        <dbReference type="ChEBI" id="CHEBI:57540"/>
    </ligand>
</feature>
<feature type="binding site" evidence="1">
    <location>
        <begin position="121"/>
        <end position="124"/>
    </location>
    <ligand>
        <name>NAD(+)</name>
        <dbReference type="ChEBI" id="CHEBI:57540"/>
    </ligand>
</feature>
<feature type="binding site" evidence="1">
    <location>
        <position position="126"/>
    </location>
    <ligand>
        <name>substrate</name>
    </ligand>
</feature>
<feature type="binding site" evidence="1">
    <location>
        <position position="130"/>
    </location>
    <ligand>
        <name>NAD(+)</name>
        <dbReference type="ChEBI" id="CHEBI:57540"/>
    </ligand>
</feature>
<feature type="binding site" evidence="1">
    <location>
        <position position="173"/>
    </location>
    <ligand>
        <name>substrate</name>
    </ligand>
</feature>
<feature type="binding site" evidence="1">
    <location>
        <position position="173"/>
    </location>
    <ligand>
        <name>Zn(2+)</name>
        <dbReference type="ChEBI" id="CHEBI:29105"/>
        <note>catalytic</note>
    </ligand>
</feature>
<feature type="binding site" evidence="1">
    <location>
        <position position="253"/>
    </location>
    <ligand>
        <name>Zn(2+)</name>
        <dbReference type="ChEBI" id="CHEBI:29105"/>
        <note>catalytic</note>
    </ligand>
</feature>
<feature type="binding site" evidence="1">
    <location>
        <position position="257"/>
    </location>
    <ligand>
        <name>substrate</name>
    </ligand>
</feature>
<feature type="binding site" evidence="1">
    <location>
        <position position="269"/>
    </location>
    <ligand>
        <name>Zn(2+)</name>
        <dbReference type="ChEBI" id="CHEBI:29105"/>
        <note>catalytic</note>
    </ligand>
</feature>
<gene>
    <name evidence="1" type="primary">egsA</name>
    <name type="ordered locus">Ta1158</name>
</gene>
<sequence length="352" mass="38496">MEFQKFRTMHFPRDVYIGHDVLEHIVDVVGENSRNKNAIIVSGDLTYELAGRKVHDLLSTYGYEVHVFLAGNANYDTLERIEYESLDIQAGIVIGVGGGAKIDLAKKLAFDRKLPFVSVPTAPSHDGIASPRASLRRNGISYSEEGAMPIGVIADTAIMIKAPYRYLAAGAADVISNLSAVKDWKLAHRLKGEEFSSSAAAMSEYSAQEVLSQINEIKKYEESSVWLVTKNILASGTAMAIAGNSRPGSGSEHLFAHALEAAGVENMLHGEMCAMGTVISMYLHDENWQQIKEAFDNLGISIRSRDYGIEDEIVINALRTAHAIRPERYTILGESDMSYDAAVKALELTGII</sequence>
<accession>Q9HJ16</accession>
<comment type="function">
    <text evidence="1">Catalyzes the NAD(P)H-dependent reduction of dihydroxyacetonephosphate (DHAP or glycerone phosphate) to glycerol 1-phosphate (G1P). The G1P thus generated is used as the glycerophosphate backbone of phospholipids in the cellular membranes of Archaea.</text>
</comment>
<comment type="catalytic activity">
    <reaction evidence="1">
        <text>sn-glycerol 1-phosphate + NAD(+) = dihydroxyacetone phosphate + NADH + H(+)</text>
        <dbReference type="Rhea" id="RHEA:21412"/>
        <dbReference type="ChEBI" id="CHEBI:15378"/>
        <dbReference type="ChEBI" id="CHEBI:57540"/>
        <dbReference type="ChEBI" id="CHEBI:57642"/>
        <dbReference type="ChEBI" id="CHEBI:57685"/>
        <dbReference type="ChEBI" id="CHEBI:57945"/>
        <dbReference type="EC" id="1.1.1.261"/>
    </reaction>
</comment>
<comment type="catalytic activity">
    <reaction evidence="1">
        <text>sn-glycerol 1-phosphate + NADP(+) = dihydroxyacetone phosphate + NADPH + H(+)</text>
        <dbReference type="Rhea" id="RHEA:21416"/>
        <dbReference type="ChEBI" id="CHEBI:15378"/>
        <dbReference type="ChEBI" id="CHEBI:57642"/>
        <dbReference type="ChEBI" id="CHEBI:57685"/>
        <dbReference type="ChEBI" id="CHEBI:57783"/>
        <dbReference type="ChEBI" id="CHEBI:58349"/>
        <dbReference type="EC" id="1.1.1.261"/>
    </reaction>
</comment>
<comment type="cofactor">
    <cofactor evidence="1">
        <name>Zn(2+)</name>
        <dbReference type="ChEBI" id="CHEBI:29105"/>
    </cofactor>
    <text evidence="1">Binds 1 zinc ion per subunit.</text>
</comment>
<comment type="pathway">
    <text evidence="1">Membrane lipid metabolism; glycerophospholipid metabolism.</text>
</comment>
<comment type="subcellular location">
    <subcellularLocation>
        <location evidence="1">Cytoplasm</location>
    </subcellularLocation>
</comment>
<comment type="similarity">
    <text evidence="1">Belongs to the glycerol-1-phosphate dehydrogenase family.</text>
</comment>
<evidence type="ECO:0000255" key="1">
    <source>
        <dbReference type="HAMAP-Rule" id="MF_00497"/>
    </source>
</evidence>
<reference key="1">
    <citation type="journal article" date="2000" name="Nature">
        <title>The genome sequence of the thermoacidophilic scavenger Thermoplasma acidophilum.</title>
        <authorList>
            <person name="Ruepp A."/>
            <person name="Graml W."/>
            <person name="Santos-Martinez M.-L."/>
            <person name="Koretke K.K."/>
            <person name="Volker C."/>
            <person name="Mewes H.-W."/>
            <person name="Frishman D."/>
            <person name="Stocker S."/>
            <person name="Lupas A.N."/>
            <person name="Baumeister W."/>
        </authorList>
    </citation>
    <scope>NUCLEOTIDE SEQUENCE [LARGE SCALE GENOMIC DNA]</scope>
    <source>
        <strain>ATCC 25905 / DSM 1728 / JCM 9062 / NBRC 15155 / AMRC-C165</strain>
    </source>
</reference>
<organism>
    <name type="scientific">Thermoplasma acidophilum (strain ATCC 25905 / DSM 1728 / JCM 9062 / NBRC 15155 / AMRC-C165)</name>
    <dbReference type="NCBI Taxonomy" id="273075"/>
    <lineage>
        <taxon>Archaea</taxon>
        <taxon>Methanobacteriati</taxon>
        <taxon>Thermoplasmatota</taxon>
        <taxon>Thermoplasmata</taxon>
        <taxon>Thermoplasmatales</taxon>
        <taxon>Thermoplasmataceae</taxon>
        <taxon>Thermoplasma</taxon>
    </lineage>
</organism>
<name>G1PDH_THEAC</name>
<dbReference type="EC" id="1.1.1.261" evidence="1"/>
<dbReference type="EMBL" id="AL445066">
    <property type="protein sequence ID" value="CAC12283.1"/>
    <property type="molecule type" value="Genomic_DNA"/>
</dbReference>
<dbReference type="RefSeq" id="WP_010901565.1">
    <property type="nucleotide sequence ID" value="NC_002578.1"/>
</dbReference>
<dbReference type="SMR" id="Q9HJ16"/>
<dbReference type="FunCoup" id="Q9HJ16">
    <property type="interactions" value="1"/>
</dbReference>
<dbReference type="STRING" id="273075.gene:9572379"/>
<dbReference type="PaxDb" id="273075-Ta1158"/>
<dbReference type="DNASU" id="1456658"/>
<dbReference type="EnsemblBacteria" id="CAC12283">
    <property type="protein sequence ID" value="CAC12283"/>
    <property type="gene ID" value="CAC12283"/>
</dbReference>
<dbReference type="KEGG" id="tac:Ta1158"/>
<dbReference type="eggNOG" id="arCOG00982">
    <property type="taxonomic scope" value="Archaea"/>
</dbReference>
<dbReference type="HOGENOM" id="CLU_038362_0_0_2"/>
<dbReference type="InParanoid" id="Q9HJ16"/>
<dbReference type="OrthoDB" id="8656at2157"/>
<dbReference type="UniPathway" id="UPA00940"/>
<dbReference type="Proteomes" id="UP000001024">
    <property type="component" value="Chromosome"/>
</dbReference>
<dbReference type="GO" id="GO:0005737">
    <property type="term" value="C:cytoplasm"/>
    <property type="evidence" value="ECO:0007669"/>
    <property type="project" value="UniProtKB-SubCell"/>
</dbReference>
<dbReference type="GO" id="GO:0106357">
    <property type="term" value="F:glycerol-1-phosphate dehydrogenase (NAD+) activity"/>
    <property type="evidence" value="ECO:0007669"/>
    <property type="project" value="RHEA"/>
</dbReference>
<dbReference type="GO" id="GO:0106358">
    <property type="term" value="F:glycerol-1-phosphate dehydrogenase (NADP+) activity"/>
    <property type="evidence" value="ECO:0007669"/>
    <property type="project" value="RHEA"/>
</dbReference>
<dbReference type="GO" id="GO:0046872">
    <property type="term" value="F:metal ion binding"/>
    <property type="evidence" value="ECO:0007669"/>
    <property type="project" value="UniProtKB-KW"/>
</dbReference>
<dbReference type="GO" id="GO:0006650">
    <property type="term" value="P:glycerophospholipid metabolic process"/>
    <property type="evidence" value="ECO:0007669"/>
    <property type="project" value="UniProtKB-UniRule"/>
</dbReference>
<dbReference type="GO" id="GO:0008654">
    <property type="term" value="P:phospholipid biosynthetic process"/>
    <property type="evidence" value="ECO:0007669"/>
    <property type="project" value="UniProtKB-KW"/>
</dbReference>
<dbReference type="CDD" id="cd08173">
    <property type="entry name" value="Gro1PDH"/>
    <property type="match status" value="1"/>
</dbReference>
<dbReference type="Gene3D" id="3.40.50.1970">
    <property type="match status" value="1"/>
</dbReference>
<dbReference type="Gene3D" id="1.20.1090.10">
    <property type="entry name" value="Dehydroquinate synthase-like - alpha domain"/>
    <property type="match status" value="1"/>
</dbReference>
<dbReference type="HAMAP" id="MF_00497_A">
    <property type="entry name" value="G1P_dehydrogenase_A"/>
    <property type="match status" value="1"/>
</dbReference>
<dbReference type="InterPro" id="IPR023002">
    <property type="entry name" value="G1P_dehydrogenase_arc"/>
</dbReference>
<dbReference type="InterPro" id="IPR032837">
    <property type="entry name" value="G1PDH"/>
</dbReference>
<dbReference type="InterPro" id="IPR016205">
    <property type="entry name" value="Glycerol_DH"/>
</dbReference>
<dbReference type="NCBIfam" id="NF002022">
    <property type="entry name" value="PRK00843.1"/>
    <property type="match status" value="1"/>
</dbReference>
<dbReference type="PANTHER" id="PTHR43616">
    <property type="entry name" value="GLYCEROL DEHYDROGENASE"/>
    <property type="match status" value="1"/>
</dbReference>
<dbReference type="PANTHER" id="PTHR43616:SF5">
    <property type="entry name" value="GLYCEROL DEHYDROGENASE 1"/>
    <property type="match status" value="1"/>
</dbReference>
<dbReference type="Pfam" id="PF13685">
    <property type="entry name" value="Fe-ADH_2"/>
    <property type="match status" value="1"/>
</dbReference>
<dbReference type="PIRSF" id="PIRSF000112">
    <property type="entry name" value="Glycerol_dehydrogenase"/>
    <property type="match status" value="1"/>
</dbReference>
<dbReference type="SUPFAM" id="SSF56796">
    <property type="entry name" value="Dehydroquinate synthase-like"/>
    <property type="match status" value="1"/>
</dbReference>
<keyword id="KW-0963">Cytoplasm</keyword>
<keyword id="KW-0444">Lipid biosynthesis</keyword>
<keyword id="KW-0443">Lipid metabolism</keyword>
<keyword id="KW-0479">Metal-binding</keyword>
<keyword id="KW-0520">NAD</keyword>
<keyword id="KW-0521">NADP</keyword>
<keyword id="KW-0560">Oxidoreductase</keyword>
<keyword id="KW-0594">Phospholipid biosynthesis</keyword>
<keyword id="KW-1208">Phospholipid metabolism</keyword>
<keyword id="KW-1185">Reference proteome</keyword>
<keyword id="KW-0862">Zinc</keyword>
<protein>
    <recommendedName>
        <fullName evidence="1">Glycerol-1-phosphate dehydrogenase [NAD(P)+]</fullName>
        <shortName evidence="1">G1P dehydrogenase</shortName>
        <shortName evidence="1">G1PDH</shortName>
        <ecNumber evidence="1">1.1.1.261</ecNumber>
    </recommendedName>
    <alternativeName>
        <fullName evidence="1">Enantiomeric glycerophosphate synthase</fullName>
    </alternativeName>
    <alternativeName>
        <fullName evidence="1">sn-glycerol-1-phosphate dehydrogenase</fullName>
    </alternativeName>
</protein>